<evidence type="ECO:0000250" key="1"/>
<evidence type="ECO:0000269" key="2">
    <source>
    </source>
</evidence>
<evidence type="ECO:0000305" key="3"/>
<protein>
    <recommendedName>
        <fullName>2,5-diketo-D-gluconic acid reductase B</fullName>
        <shortName>2,5-DKG reductase B</shortName>
        <shortName>2,5-DKGR B</shortName>
        <shortName>25DKGR-B</shortName>
        <ecNumber>1.1.1.274</ecNumber>
    </recommendedName>
    <alternativeName>
        <fullName>AKR5D</fullName>
    </alternativeName>
</protein>
<reference key="1">
    <citation type="journal article" date="1988" name="Appl. Environ. Microbiol.">
        <title>Conversion of glucose to 2-keto-L-gulonate, an intermediate in L-ascorbate synthesis, by a recombinant strain of Erwinia citreus.</title>
        <authorList>
            <person name="Grindley J.F."/>
            <person name="Payton M.A."/>
            <person name="van de Pol H."/>
            <person name="Hardy K.G."/>
        </authorList>
    </citation>
    <scope>NUCLEOTIDE SEQUENCE [GENOMIC DNA]</scope>
    <scope>PROTEIN SEQUENCE OF 2-61 AND 147-176</scope>
    <scope>FUNCTION</scope>
</reference>
<gene>
    <name type="primary">dkgB</name>
</gene>
<dbReference type="EC" id="1.1.1.274"/>
<dbReference type="EMBL" id="M21193">
    <property type="protein sequence ID" value="AAA23291.1"/>
    <property type="molecule type" value="Genomic_DNA"/>
</dbReference>
<dbReference type="PIR" id="A45961">
    <property type="entry name" value="A45961"/>
</dbReference>
<dbReference type="SMR" id="P15339"/>
<dbReference type="GO" id="GO:0005737">
    <property type="term" value="C:cytoplasm"/>
    <property type="evidence" value="ECO:0007669"/>
    <property type="project" value="UniProtKB-SubCell"/>
</dbReference>
<dbReference type="GO" id="GO:0050580">
    <property type="term" value="F:2,5-didehydrogluconate reductase activity"/>
    <property type="evidence" value="ECO:0007669"/>
    <property type="project" value="UniProtKB-EC"/>
</dbReference>
<dbReference type="GO" id="GO:0004033">
    <property type="term" value="F:aldo-keto reductase (NADPH) activity"/>
    <property type="evidence" value="ECO:0007669"/>
    <property type="project" value="TreeGrafter"/>
</dbReference>
<dbReference type="GO" id="GO:0019853">
    <property type="term" value="P:L-ascorbic acid biosynthetic process"/>
    <property type="evidence" value="ECO:0007669"/>
    <property type="project" value="UniProtKB-KW"/>
</dbReference>
<dbReference type="CDD" id="cd19132">
    <property type="entry name" value="AKR_AKR5D1_E1"/>
    <property type="match status" value="1"/>
</dbReference>
<dbReference type="FunFam" id="3.20.20.100:FF:000002">
    <property type="entry name" value="2,5-diketo-D-gluconic acid reductase A"/>
    <property type="match status" value="1"/>
</dbReference>
<dbReference type="Gene3D" id="3.20.20.100">
    <property type="entry name" value="NADP-dependent oxidoreductase domain"/>
    <property type="match status" value="1"/>
</dbReference>
<dbReference type="InterPro" id="IPR020471">
    <property type="entry name" value="AKR"/>
</dbReference>
<dbReference type="InterPro" id="IPR018170">
    <property type="entry name" value="Aldo/ket_reductase_CS"/>
</dbReference>
<dbReference type="InterPro" id="IPR023210">
    <property type="entry name" value="NADP_OxRdtase_dom"/>
</dbReference>
<dbReference type="InterPro" id="IPR036812">
    <property type="entry name" value="NADP_OxRdtase_dom_sf"/>
</dbReference>
<dbReference type="PANTHER" id="PTHR43827">
    <property type="entry name" value="2,5-DIKETO-D-GLUCONIC ACID REDUCTASE"/>
    <property type="match status" value="1"/>
</dbReference>
<dbReference type="PANTHER" id="PTHR43827:SF3">
    <property type="entry name" value="NADP-DEPENDENT OXIDOREDUCTASE DOMAIN-CONTAINING PROTEIN"/>
    <property type="match status" value="1"/>
</dbReference>
<dbReference type="Pfam" id="PF00248">
    <property type="entry name" value="Aldo_ket_red"/>
    <property type="match status" value="1"/>
</dbReference>
<dbReference type="PIRSF" id="PIRSF000097">
    <property type="entry name" value="AKR"/>
    <property type="match status" value="1"/>
</dbReference>
<dbReference type="PRINTS" id="PR00069">
    <property type="entry name" value="ALDKETRDTASE"/>
</dbReference>
<dbReference type="SUPFAM" id="SSF51430">
    <property type="entry name" value="NAD(P)-linked oxidoreductase"/>
    <property type="match status" value="1"/>
</dbReference>
<dbReference type="PROSITE" id="PS00798">
    <property type="entry name" value="ALDOKETO_REDUCTASE_1"/>
    <property type="match status" value="1"/>
</dbReference>
<dbReference type="PROSITE" id="PS00062">
    <property type="entry name" value="ALDOKETO_REDUCTASE_2"/>
    <property type="match status" value="1"/>
</dbReference>
<dbReference type="PROSITE" id="PS00063">
    <property type="entry name" value="ALDOKETO_REDUCTASE_3"/>
    <property type="match status" value="1"/>
</dbReference>
<sequence>MPNIPTISLNDGRPFAEPGLGTYNLRGDEGVAAMVAAIDSGYRLLDTAVNYENESEVGRAVRASSVDRDELIVASKIPGRQHGRAEAVDSIRGSLDRLGLDVIDLQLIHWPNPSVGRWLDTWRGMIDAREAGLVRSIGVSNFTEPMLKTLIDETGVTPAVNQVELHPYFPQAALRAFHDEHGIRTESWSPLARRSELLTEQLLQELAVVYGVTPTQVVLRWHVQLGSTPIPKSADPDRQRENADVFGFALTADQVDAISGLERGRLWDGDPDTHEEM</sequence>
<proteinExistence type="evidence at protein level"/>
<organism>
    <name type="scientific">Corynebacterium sp. (strain SHS752001)</name>
    <dbReference type="NCBI Taxonomy" id="268953"/>
    <lineage>
        <taxon>Bacteria</taxon>
        <taxon>Bacillati</taxon>
        <taxon>Actinomycetota</taxon>
        <taxon>Actinomycetes</taxon>
        <taxon>Mycobacteriales</taxon>
        <taxon>Corynebacteriaceae</taxon>
        <taxon>Corynebacterium</taxon>
    </lineage>
</organism>
<feature type="initiator methionine" description="Removed" evidence="2">
    <location>
        <position position="1"/>
    </location>
</feature>
<feature type="chain" id="PRO_0000124598" description="2,5-diketo-D-gluconic acid reductase B">
    <location>
        <begin position="2"/>
        <end position="277"/>
    </location>
</feature>
<feature type="active site" description="Proton donor" evidence="1">
    <location>
        <position position="51"/>
    </location>
</feature>
<feature type="binding site" evidence="1">
    <location>
        <position position="109"/>
    </location>
    <ligand>
        <name>substrate</name>
    </ligand>
</feature>
<feature type="binding site" evidence="1">
    <location>
        <begin position="189"/>
        <end position="242"/>
    </location>
    <ligand>
        <name>NADP(+)</name>
        <dbReference type="ChEBI" id="CHEBI:58349"/>
    </ligand>
</feature>
<keyword id="KW-0060">Ascorbate biosynthesis</keyword>
<keyword id="KW-0963">Cytoplasm</keyword>
<keyword id="KW-0903">Direct protein sequencing</keyword>
<keyword id="KW-0521">NADP</keyword>
<keyword id="KW-0560">Oxidoreductase</keyword>
<comment type="function">
    <text evidence="2">Catalyzes the reduction of 2,5-diketo-D-gluconic acid (25DKG) to 2-keto-L-gulonic acid (2KLG). 25DKGR-B has higher catalytic efficiency than 25DKGR-A.</text>
</comment>
<comment type="catalytic activity">
    <reaction>
        <text>2-dehydro-D-gluconate + NADP(+) = 2,5-didehydro-D-gluconate + NADPH + H(+)</text>
        <dbReference type="Rhea" id="RHEA:23828"/>
        <dbReference type="ChEBI" id="CHEBI:11449"/>
        <dbReference type="ChEBI" id="CHEBI:15378"/>
        <dbReference type="ChEBI" id="CHEBI:16808"/>
        <dbReference type="ChEBI" id="CHEBI:57783"/>
        <dbReference type="ChEBI" id="CHEBI:58349"/>
        <dbReference type="EC" id="1.1.1.274"/>
    </reaction>
</comment>
<comment type="subcellular location">
    <subcellularLocation>
        <location evidence="3">Cytoplasm</location>
    </subcellularLocation>
</comment>
<comment type="miscellaneous">
    <text>2-keto-L-gulonic acid is a key intermediate in the production of L-ascorbic acid (vitamin C).</text>
</comment>
<comment type="similarity">
    <text evidence="3">Belongs to the aldo/keto reductase family.</text>
</comment>
<accession>P15339</accession>
<name>DKGB_CORSS</name>